<dbReference type="EC" id="7.-.-.-" evidence="1"/>
<dbReference type="EMBL" id="CP000024">
    <property type="protein sequence ID" value="AAV63519.1"/>
    <property type="molecule type" value="Genomic_DNA"/>
</dbReference>
<dbReference type="RefSeq" id="WP_002947776.1">
    <property type="nucleotide sequence ID" value="NC_006449.1"/>
</dbReference>
<dbReference type="SMR" id="Q5LXJ3"/>
<dbReference type="KEGG" id="stc:str2009"/>
<dbReference type="HOGENOM" id="CLU_000604_1_22_9"/>
<dbReference type="GO" id="GO:0043190">
    <property type="term" value="C:ATP-binding cassette (ABC) transporter complex"/>
    <property type="evidence" value="ECO:0007669"/>
    <property type="project" value="TreeGrafter"/>
</dbReference>
<dbReference type="GO" id="GO:0005524">
    <property type="term" value="F:ATP binding"/>
    <property type="evidence" value="ECO:0007669"/>
    <property type="project" value="UniProtKB-KW"/>
</dbReference>
<dbReference type="GO" id="GO:0016887">
    <property type="term" value="F:ATP hydrolysis activity"/>
    <property type="evidence" value="ECO:0007669"/>
    <property type="project" value="InterPro"/>
</dbReference>
<dbReference type="GO" id="GO:0042626">
    <property type="term" value="F:ATPase-coupled transmembrane transporter activity"/>
    <property type="evidence" value="ECO:0007669"/>
    <property type="project" value="TreeGrafter"/>
</dbReference>
<dbReference type="CDD" id="cd03225">
    <property type="entry name" value="ABC_cobalt_CbiO_domain1"/>
    <property type="match status" value="1"/>
</dbReference>
<dbReference type="FunFam" id="3.40.50.300:FF:000224">
    <property type="entry name" value="Energy-coupling factor transporter ATP-binding protein EcfA"/>
    <property type="match status" value="1"/>
</dbReference>
<dbReference type="Gene3D" id="3.40.50.300">
    <property type="entry name" value="P-loop containing nucleotide triphosphate hydrolases"/>
    <property type="match status" value="1"/>
</dbReference>
<dbReference type="InterPro" id="IPR003593">
    <property type="entry name" value="AAA+_ATPase"/>
</dbReference>
<dbReference type="InterPro" id="IPR003439">
    <property type="entry name" value="ABC_transporter-like_ATP-bd"/>
</dbReference>
<dbReference type="InterPro" id="IPR017871">
    <property type="entry name" value="ABC_transporter-like_CS"/>
</dbReference>
<dbReference type="InterPro" id="IPR015856">
    <property type="entry name" value="ABC_transpr_CbiO/EcfA_su"/>
</dbReference>
<dbReference type="InterPro" id="IPR050095">
    <property type="entry name" value="ECF_ABC_transporter_ATP-bd"/>
</dbReference>
<dbReference type="InterPro" id="IPR030947">
    <property type="entry name" value="EcfA_1"/>
</dbReference>
<dbReference type="InterPro" id="IPR027417">
    <property type="entry name" value="P-loop_NTPase"/>
</dbReference>
<dbReference type="NCBIfam" id="TIGR04520">
    <property type="entry name" value="ECF_ATPase_1"/>
    <property type="match status" value="1"/>
</dbReference>
<dbReference type="NCBIfam" id="NF010156">
    <property type="entry name" value="PRK13635.1"/>
    <property type="match status" value="1"/>
</dbReference>
<dbReference type="NCBIfam" id="NF010167">
    <property type="entry name" value="PRK13648.1"/>
    <property type="match status" value="1"/>
</dbReference>
<dbReference type="PANTHER" id="PTHR43553:SF24">
    <property type="entry name" value="ENERGY-COUPLING FACTOR TRANSPORTER ATP-BINDING PROTEIN ECFA1"/>
    <property type="match status" value="1"/>
</dbReference>
<dbReference type="PANTHER" id="PTHR43553">
    <property type="entry name" value="HEAVY METAL TRANSPORTER"/>
    <property type="match status" value="1"/>
</dbReference>
<dbReference type="Pfam" id="PF00005">
    <property type="entry name" value="ABC_tran"/>
    <property type="match status" value="1"/>
</dbReference>
<dbReference type="SMART" id="SM00382">
    <property type="entry name" value="AAA"/>
    <property type="match status" value="1"/>
</dbReference>
<dbReference type="SUPFAM" id="SSF52540">
    <property type="entry name" value="P-loop containing nucleoside triphosphate hydrolases"/>
    <property type="match status" value="1"/>
</dbReference>
<dbReference type="PROSITE" id="PS00211">
    <property type="entry name" value="ABC_TRANSPORTER_1"/>
    <property type="match status" value="1"/>
</dbReference>
<dbReference type="PROSITE" id="PS50893">
    <property type="entry name" value="ABC_TRANSPORTER_2"/>
    <property type="match status" value="1"/>
</dbReference>
<dbReference type="PROSITE" id="PS51246">
    <property type="entry name" value="CBIO"/>
    <property type="match status" value="1"/>
</dbReference>
<feature type="chain" id="PRO_0000288014" description="Energy-coupling factor transporter ATP-binding protein EcfA1">
    <location>
        <begin position="1"/>
        <end position="276"/>
    </location>
</feature>
<feature type="domain" description="ABC transporter" evidence="1">
    <location>
        <begin position="2"/>
        <end position="237"/>
    </location>
</feature>
<feature type="binding site" evidence="1">
    <location>
        <begin position="37"/>
        <end position="44"/>
    </location>
    <ligand>
        <name>ATP</name>
        <dbReference type="ChEBI" id="CHEBI:30616"/>
    </ligand>
</feature>
<sequence>MIEIKNLKFKYNQDQTSYTLNDVSFHVKHGEWLSIVGHNGSGKSTTARLIGGLLVADSGQIIVDGQELTEETVWDIRDKIGMVFQNPDNQFVGATVEDDVAFGLENKGLPYKEMVSRVQEALSFVGMMDFKDREPARLSGGQKQRVAIAGIIAMRPSILILDEATSMLDPEGRQELIQYIEDIRQQYGMTVLSITHDLDEVAMSNRVLVLKQGKVESISSPRELFSRGSELVDLGLDIPFSALLTQKLKNQGLIDCEGYLTEKELVEQLWEYLSKM</sequence>
<accession>Q5LXJ3</accession>
<reference key="1">
    <citation type="journal article" date="2004" name="Nat. Biotechnol.">
        <title>Complete sequence and comparative genome analysis of the dairy bacterium Streptococcus thermophilus.</title>
        <authorList>
            <person name="Bolotin A."/>
            <person name="Quinquis B."/>
            <person name="Renault P."/>
            <person name="Sorokin A."/>
            <person name="Ehrlich S.D."/>
            <person name="Kulakauskas S."/>
            <person name="Lapidus A."/>
            <person name="Goltsman E."/>
            <person name="Mazur M."/>
            <person name="Pusch G.D."/>
            <person name="Fonstein M."/>
            <person name="Overbeek R."/>
            <person name="Kyprides N."/>
            <person name="Purnelle B."/>
            <person name="Prozzi D."/>
            <person name="Ngui K."/>
            <person name="Masuy D."/>
            <person name="Hancy F."/>
            <person name="Burteau S."/>
            <person name="Boutry M."/>
            <person name="Delcour J."/>
            <person name="Goffeau A."/>
            <person name="Hols P."/>
        </authorList>
    </citation>
    <scope>NUCLEOTIDE SEQUENCE [LARGE SCALE GENOMIC DNA]</scope>
    <source>
        <strain>CNRZ 1066</strain>
    </source>
</reference>
<proteinExistence type="inferred from homology"/>
<protein>
    <recommendedName>
        <fullName evidence="1">Energy-coupling factor transporter ATP-binding protein EcfA1</fullName>
        <shortName evidence="1">ECF transporter A component EcfA1</shortName>
        <ecNumber evidence="1">7.-.-.-</ecNumber>
    </recommendedName>
</protein>
<name>ECFA1_STRT1</name>
<gene>
    <name evidence="1" type="primary">ecfA1</name>
    <name type="synonym">cbiO1</name>
    <name type="ordered locus">str2009</name>
</gene>
<keyword id="KW-0067">ATP-binding</keyword>
<keyword id="KW-1003">Cell membrane</keyword>
<keyword id="KW-0472">Membrane</keyword>
<keyword id="KW-0547">Nucleotide-binding</keyword>
<keyword id="KW-1278">Translocase</keyword>
<keyword id="KW-0813">Transport</keyword>
<organism>
    <name type="scientific">Streptococcus thermophilus (strain CNRZ 1066)</name>
    <dbReference type="NCBI Taxonomy" id="299768"/>
    <lineage>
        <taxon>Bacteria</taxon>
        <taxon>Bacillati</taxon>
        <taxon>Bacillota</taxon>
        <taxon>Bacilli</taxon>
        <taxon>Lactobacillales</taxon>
        <taxon>Streptococcaceae</taxon>
        <taxon>Streptococcus</taxon>
    </lineage>
</organism>
<evidence type="ECO:0000255" key="1">
    <source>
        <dbReference type="HAMAP-Rule" id="MF_01710"/>
    </source>
</evidence>
<comment type="function">
    <text evidence="1">ATP-binding (A) component of a common energy-coupling factor (ECF) ABC-transporter complex. Unlike classic ABC transporters this ECF transporter provides the energy necessary to transport a number of different substrates.</text>
</comment>
<comment type="subunit">
    <text evidence="1">Forms a stable energy-coupling factor (ECF) transporter complex composed of 2 membrane-embedded substrate-binding proteins (S component), 2 ATP-binding proteins (A component) and 2 transmembrane proteins (T component).</text>
</comment>
<comment type="subcellular location">
    <subcellularLocation>
        <location evidence="1">Cell membrane</location>
        <topology evidence="1">Peripheral membrane protein</topology>
    </subcellularLocation>
</comment>
<comment type="similarity">
    <text evidence="1">Belongs to the ABC transporter superfamily. Energy-coupling factor EcfA family.</text>
</comment>